<gene>
    <name evidence="1" type="primary">queC</name>
    <name type="ordered locus">HI_1191</name>
</gene>
<comment type="function">
    <text evidence="1">Catalyzes the ATP-dependent conversion of 7-carboxy-7-deazaguanine (CDG) to 7-cyano-7-deazaguanine (preQ(0)).</text>
</comment>
<comment type="catalytic activity">
    <reaction evidence="1">
        <text>7-carboxy-7-deazaguanine + NH4(+) + ATP = 7-cyano-7-deazaguanine + ADP + phosphate + H2O + H(+)</text>
        <dbReference type="Rhea" id="RHEA:27982"/>
        <dbReference type="ChEBI" id="CHEBI:15377"/>
        <dbReference type="ChEBI" id="CHEBI:15378"/>
        <dbReference type="ChEBI" id="CHEBI:28938"/>
        <dbReference type="ChEBI" id="CHEBI:30616"/>
        <dbReference type="ChEBI" id="CHEBI:43474"/>
        <dbReference type="ChEBI" id="CHEBI:45075"/>
        <dbReference type="ChEBI" id="CHEBI:61036"/>
        <dbReference type="ChEBI" id="CHEBI:456216"/>
        <dbReference type="EC" id="6.3.4.20"/>
    </reaction>
</comment>
<comment type="cofactor">
    <cofactor evidence="1">
        <name>Zn(2+)</name>
        <dbReference type="ChEBI" id="CHEBI:29105"/>
    </cofactor>
    <text evidence="1">Binds 1 zinc ion per subunit.</text>
</comment>
<comment type="pathway">
    <text evidence="1">Purine metabolism; 7-cyano-7-deazaguanine biosynthesis.</text>
</comment>
<comment type="similarity">
    <text evidence="1">Belongs to the QueC family.</text>
</comment>
<comment type="sequence caution" evidence="2">
    <conflict type="frameshift">
        <sequence resource="EMBL-CDS" id="AAC22844"/>
    </conflict>
</comment>
<keyword id="KW-0067">ATP-binding</keyword>
<keyword id="KW-0436">Ligase</keyword>
<keyword id="KW-0479">Metal-binding</keyword>
<keyword id="KW-0547">Nucleotide-binding</keyword>
<keyword id="KW-0671">Queuosine biosynthesis</keyword>
<keyword id="KW-1185">Reference proteome</keyword>
<keyword id="KW-0862">Zinc</keyword>
<protein>
    <recommendedName>
        <fullName evidence="1">7-cyano-7-deazaguanine synthase</fullName>
        <ecNumber evidence="1">6.3.4.20</ecNumber>
    </recommendedName>
    <alternativeName>
        <fullName evidence="1">7-cyano-7-carbaguanine synthase</fullName>
    </alternativeName>
    <alternativeName>
        <fullName evidence="1">PreQ(0) synthase</fullName>
    </alternativeName>
    <alternativeName>
        <fullName evidence="1">Queuosine biosynthesis protein QueC</fullName>
    </alternativeName>
</protein>
<reference key="1">
    <citation type="journal article" date="1995" name="Science">
        <title>Whole-genome random sequencing and assembly of Haemophilus influenzae Rd.</title>
        <authorList>
            <person name="Fleischmann R.D."/>
            <person name="Adams M.D."/>
            <person name="White O."/>
            <person name="Clayton R.A."/>
            <person name="Kirkness E.F."/>
            <person name="Kerlavage A.R."/>
            <person name="Bult C.J."/>
            <person name="Tomb J.-F."/>
            <person name="Dougherty B.A."/>
            <person name="Merrick J.M."/>
            <person name="McKenney K."/>
            <person name="Sutton G.G."/>
            <person name="FitzHugh W."/>
            <person name="Fields C.A."/>
            <person name="Gocayne J.D."/>
            <person name="Scott J.D."/>
            <person name="Shirley R."/>
            <person name="Liu L.-I."/>
            <person name="Glodek A."/>
            <person name="Kelley J.M."/>
            <person name="Weidman J.F."/>
            <person name="Phillips C.A."/>
            <person name="Spriggs T."/>
            <person name="Hedblom E."/>
            <person name="Cotton M.D."/>
            <person name="Utterback T.R."/>
            <person name="Hanna M.C."/>
            <person name="Nguyen D.T."/>
            <person name="Saudek D.M."/>
            <person name="Brandon R.C."/>
            <person name="Fine L.D."/>
            <person name="Fritchman J.L."/>
            <person name="Fuhrmann J.L."/>
            <person name="Geoghagen N.S.M."/>
            <person name="Gnehm C.L."/>
            <person name="McDonald L.A."/>
            <person name="Small K.V."/>
            <person name="Fraser C.M."/>
            <person name="Smith H.O."/>
            <person name="Venter J.C."/>
        </authorList>
    </citation>
    <scope>NUCLEOTIDE SEQUENCE [LARGE SCALE GENOMIC DNA]</scope>
    <source>
        <strain>ATCC 51907 / DSM 11121 / KW20 / Rd</strain>
    </source>
</reference>
<feature type="chain" id="PRO_0000168632" description="7-cyano-7-deazaguanine synthase">
    <location>
        <begin position="1"/>
        <end position="228"/>
    </location>
</feature>
<feature type="binding site" evidence="1">
    <location>
        <begin position="16"/>
        <end position="26"/>
    </location>
    <ligand>
        <name>ATP</name>
        <dbReference type="ChEBI" id="CHEBI:30616"/>
    </ligand>
</feature>
<feature type="binding site" evidence="1">
    <location>
        <position position="195"/>
    </location>
    <ligand>
        <name>Zn(2+)</name>
        <dbReference type="ChEBI" id="CHEBI:29105"/>
    </ligand>
</feature>
<feature type="binding site" evidence="1">
    <location>
        <position position="203"/>
    </location>
    <ligand>
        <name>Zn(2+)</name>
        <dbReference type="ChEBI" id="CHEBI:29105"/>
    </ligand>
</feature>
<feature type="binding site" evidence="1">
    <location>
        <position position="206"/>
    </location>
    <ligand>
        <name>Zn(2+)</name>
        <dbReference type="ChEBI" id="CHEBI:29105"/>
    </ligand>
</feature>
<feature type="binding site" evidence="1">
    <location>
        <position position="209"/>
    </location>
    <ligand>
        <name>Zn(2+)</name>
        <dbReference type="ChEBI" id="CHEBI:29105"/>
    </ligand>
</feature>
<dbReference type="EC" id="6.3.4.20" evidence="1"/>
<dbReference type="EMBL" id="L42023">
    <property type="protein sequence ID" value="AAC22844.1"/>
    <property type="status" value="ALT_FRAME"/>
    <property type="molecule type" value="Genomic_DNA"/>
</dbReference>
<dbReference type="PIR" id="G64021">
    <property type="entry name" value="G64021"/>
</dbReference>
<dbReference type="SMR" id="P44124"/>
<dbReference type="STRING" id="71421.HI_1191"/>
<dbReference type="EnsemblBacteria" id="AAC22844">
    <property type="protein sequence ID" value="AAC22844"/>
    <property type="gene ID" value="HI_1191"/>
</dbReference>
<dbReference type="KEGG" id="hin:HI_1191"/>
<dbReference type="eggNOG" id="COG0603">
    <property type="taxonomic scope" value="Bacteria"/>
</dbReference>
<dbReference type="HOGENOM" id="CLU_081854_0_0_6"/>
<dbReference type="UniPathway" id="UPA00391"/>
<dbReference type="Proteomes" id="UP000000579">
    <property type="component" value="Chromosome"/>
</dbReference>
<dbReference type="GO" id="GO:0005524">
    <property type="term" value="F:ATP binding"/>
    <property type="evidence" value="ECO:0007669"/>
    <property type="project" value="UniProtKB-UniRule"/>
</dbReference>
<dbReference type="GO" id="GO:0016879">
    <property type="term" value="F:ligase activity, forming carbon-nitrogen bonds"/>
    <property type="evidence" value="ECO:0007669"/>
    <property type="project" value="UniProtKB-UniRule"/>
</dbReference>
<dbReference type="GO" id="GO:0008270">
    <property type="term" value="F:zinc ion binding"/>
    <property type="evidence" value="ECO:0007669"/>
    <property type="project" value="UniProtKB-UniRule"/>
</dbReference>
<dbReference type="GO" id="GO:0008616">
    <property type="term" value="P:queuosine biosynthetic process"/>
    <property type="evidence" value="ECO:0007669"/>
    <property type="project" value="UniProtKB-UniRule"/>
</dbReference>
<dbReference type="CDD" id="cd01995">
    <property type="entry name" value="QueC-like"/>
    <property type="match status" value="1"/>
</dbReference>
<dbReference type="Gene3D" id="3.40.50.620">
    <property type="entry name" value="HUPs"/>
    <property type="match status" value="1"/>
</dbReference>
<dbReference type="HAMAP" id="MF_01633">
    <property type="entry name" value="QueC"/>
    <property type="match status" value="1"/>
</dbReference>
<dbReference type="InterPro" id="IPR018317">
    <property type="entry name" value="QueC"/>
</dbReference>
<dbReference type="InterPro" id="IPR014729">
    <property type="entry name" value="Rossmann-like_a/b/a_fold"/>
</dbReference>
<dbReference type="NCBIfam" id="TIGR00364">
    <property type="entry name" value="7-cyano-7-deazaguanine synthase QueC"/>
    <property type="match status" value="1"/>
</dbReference>
<dbReference type="PANTHER" id="PTHR42914">
    <property type="entry name" value="7-CYANO-7-DEAZAGUANINE SYNTHASE"/>
    <property type="match status" value="1"/>
</dbReference>
<dbReference type="PANTHER" id="PTHR42914:SF1">
    <property type="entry name" value="7-CYANO-7-DEAZAGUANINE SYNTHASE"/>
    <property type="match status" value="1"/>
</dbReference>
<dbReference type="Pfam" id="PF06508">
    <property type="entry name" value="QueC"/>
    <property type="match status" value="1"/>
</dbReference>
<dbReference type="PIRSF" id="PIRSF006293">
    <property type="entry name" value="ExsB"/>
    <property type="match status" value="1"/>
</dbReference>
<dbReference type="SUPFAM" id="SSF52402">
    <property type="entry name" value="Adenine nucleotide alpha hydrolases-like"/>
    <property type="match status" value="1"/>
</dbReference>
<sequence>MNIFNPNHDRKAIVIFSGGQDSTTCLFQAIAEYGKENIEAITFQYGQRHAIELEKARTIAQDLGIKQTLIDTSVMKAITHNALMDEQAHIEQKENELPNTFVDGRNALFLLYAAIYAKGQGIQDIITGVCETDFSGYPDCRDVFIKSMNVTLNLAMDYPIPISKTPLMYLTKAQTWQLADELGVLDYVQKHTHTCYEGIEGGCRKCPSCILRNKGLKKYLTQKGRKNV</sequence>
<proteinExistence type="inferred from homology"/>
<evidence type="ECO:0000255" key="1">
    <source>
        <dbReference type="HAMAP-Rule" id="MF_01633"/>
    </source>
</evidence>
<evidence type="ECO:0000305" key="2"/>
<accession>P44124</accession>
<name>QUEC_HAEIN</name>
<organism>
    <name type="scientific">Haemophilus influenzae (strain ATCC 51907 / DSM 11121 / KW20 / Rd)</name>
    <dbReference type="NCBI Taxonomy" id="71421"/>
    <lineage>
        <taxon>Bacteria</taxon>
        <taxon>Pseudomonadati</taxon>
        <taxon>Pseudomonadota</taxon>
        <taxon>Gammaproteobacteria</taxon>
        <taxon>Pasteurellales</taxon>
        <taxon>Pasteurellaceae</taxon>
        <taxon>Haemophilus</taxon>
    </lineage>
</organism>